<keyword id="KW-0013">ADP-ribosylation</keyword>
<keyword id="KW-1040">Host Golgi apparatus</keyword>
<keyword id="KW-0597">Phosphoprotein</keyword>
<keyword id="KW-0687">Ribonucleoprotein</keyword>
<keyword id="KW-0694">RNA-binding</keyword>
<keyword id="KW-0804">Transcription</keyword>
<keyword id="KW-0805">Transcription regulation</keyword>
<keyword id="KW-0543">Viral nucleoprotein</keyword>
<keyword id="KW-0946">Virion</keyword>
<organismHost>
    <name type="scientific">Sus scrofa</name>
    <name type="common">Pig</name>
    <dbReference type="NCBI Taxonomy" id="9823"/>
</organismHost>
<comment type="function">
    <text evidence="2">Packages the positive strand viral genome RNA into a helical ribonucleocapsid (RNP) and plays a fundamental role during virion assembly through its interactions with the viral genome and membrane protein M. Plays an important role in enhancing the efficiency of subgenomic viral RNA transcription as well as viral replication.</text>
</comment>
<comment type="subunit">
    <text evidence="2">Homooligomer. Both monomeric and oligomeric forms interact with RNA. Interacts with protein M. Interacts with NSP3; this interaction serves to tether the genome to the newly translated replicase-transcriptase complex at a very early stage of infection.</text>
</comment>
<comment type="subcellular location">
    <subcellularLocation>
        <location evidence="2">Virion</location>
    </subcellularLocation>
    <subcellularLocation>
        <location evidence="2">Host endoplasmic reticulum-Golgi intermediate compartment</location>
    </subcellularLocation>
    <subcellularLocation>
        <location evidence="2">Host Golgi apparatus</location>
    </subcellularLocation>
    <text evidence="2">Located inside the virion, complexed with the viral RNA. Probably associates with ER-derived membranes where it participates in viral RNA synthesis and virus budding.</text>
</comment>
<comment type="PTM">
    <text evidence="2">ADP-ribosylated. The ADP-ribosylation is retained in the virion during infection.</text>
</comment>
<comment type="PTM">
    <text evidence="2">Phosphorylated on serine and threonine residues.</text>
</comment>
<comment type="similarity">
    <text evidence="2">Belongs to the betacoronavirus nucleocapsid protein family.</text>
</comment>
<dbReference type="EMBL" id="AF481863">
    <property type="protein sequence ID" value="AAM77005.1"/>
    <property type="molecule type" value="Genomic_RNA"/>
</dbReference>
<dbReference type="SMR" id="Q8JSP4"/>
<dbReference type="Proteomes" id="UP000007543">
    <property type="component" value="Genome"/>
</dbReference>
<dbReference type="GO" id="GO:0044172">
    <property type="term" value="C:host cell endoplasmic reticulum-Golgi intermediate compartment"/>
    <property type="evidence" value="ECO:0007669"/>
    <property type="project" value="UniProtKB-SubCell"/>
</dbReference>
<dbReference type="GO" id="GO:0044177">
    <property type="term" value="C:host cell Golgi apparatus"/>
    <property type="evidence" value="ECO:0007669"/>
    <property type="project" value="UniProtKB-SubCell"/>
</dbReference>
<dbReference type="GO" id="GO:1990904">
    <property type="term" value="C:ribonucleoprotein complex"/>
    <property type="evidence" value="ECO:0007669"/>
    <property type="project" value="UniProtKB-KW"/>
</dbReference>
<dbReference type="GO" id="GO:0019013">
    <property type="term" value="C:viral nucleocapsid"/>
    <property type="evidence" value="ECO:0007669"/>
    <property type="project" value="UniProtKB-UniRule"/>
</dbReference>
<dbReference type="GO" id="GO:0003723">
    <property type="term" value="F:RNA binding"/>
    <property type="evidence" value="ECO:0007669"/>
    <property type="project" value="UniProtKB-UniRule"/>
</dbReference>
<dbReference type="CDD" id="cd21595">
    <property type="entry name" value="CoV_N-CTD"/>
    <property type="match status" value="1"/>
</dbReference>
<dbReference type="CDD" id="cd21554">
    <property type="entry name" value="CoV_N-NTD"/>
    <property type="match status" value="1"/>
</dbReference>
<dbReference type="HAMAP" id="MF_04096">
    <property type="entry name" value="BETA_CORONA_NCAP"/>
    <property type="match status" value="1"/>
</dbReference>
<dbReference type="InterPro" id="IPR044344">
    <property type="entry name" value="N_prot_C_CoV"/>
</dbReference>
<dbReference type="InterPro" id="IPR044345">
    <property type="entry name" value="N_prot_N_CoV"/>
</dbReference>
<dbReference type="InterPro" id="IPR043505">
    <property type="entry name" value="NCAP_bCoV"/>
</dbReference>
<dbReference type="InterPro" id="IPR001218">
    <property type="entry name" value="Nucleocap_CoV"/>
</dbReference>
<dbReference type="InterPro" id="IPR037179">
    <property type="entry name" value="Nucleocapsid_C"/>
</dbReference>
<dbReference type="InterPro" id="IPR037195">
    <property type="entry name" value="Nucleocapsid_N"/>
</dbReference>
<dbReference type="Pfam" id="PF00937">
    <property type="entry name" value="CoV_nucleocap"/>
    <property type="match status" value="1"/>
</dbReference>
<dbReference type="PIRSF" id="PIRSF003888">
    <property type="entry name" value="Corona_nucleocap"/>
    <property type="match status" value="1"/>
</dbReference>
<dbReference type="SUPFAM" id="SSF110304">
    <property type="entry name" value="Coronavirus RNA-binding domain"/>
    <property type="match status" value="1"/>
</dbReference>
<dbReference type="SUPFAM" id="SSF103068">
    <property type="entry name" value="Nucleocapsid protein dimerization domain"/>
    <property type="match status" value="1"/>
</dbReference>
<dbReference type="PROSITE" id="PS51929">
    <property type="entry name" value="COV_N_CTD"/>
    <property type="match status" value="1"/>
</dbReference>
<dbReference type="PROSITE" id="PS51928">
    <property type="entry name" value="COV_N_NTD"/>
    <property type="match status" value="1"/>
</dbReference>
<proteinExistence type="inferred from homology"/>
<reference key="1">
    <citation type="journal article" date="2002" name="J. Gen. Virol.">
        <title>Sequence of the 3'-terminal end (8.1 kb) of the genome of porcine haemagglutinating encephalomyelitis virus: comparison with other haemagglutinating coronaviruses.</title>
        <authorList>
            <person name="Sasseville A.M.-J."/>
            <person name="Boutin M."/>
            <person name="Gelinas A.-M."/>
            <person name="Dea S."/>
        </authorList>
    </citation>
    <scope>NUCLEOTIDE SEQUENCE [GENOMIC RNA]</scope>
</reference>
<sequence length="449" mass="49534">MSFTPGKQSSSRASSGNRSGNGILKWADQSDQSRNVQTRGRRVQSKQTATSQQPSGGTVVPYYSWFSGITQFQKGKEFEFAEGQGVPIAPGVPATEAKGYWYRHNRRSFKTADGNQRQLLPRWYFYYLGTGPHAKHQYGTDIDGVFWVASNQADINTPADIVDRDPSSDEAIPTRFPPGTVLPQGYYIEGSGRSAPNSRSTSRAPNRAPSAGSRSRANSGNRTSTPGVTPDMADQIASLVLAKLGKDATKPQQVTKQTAKEVRQKILNKPRQKRSPNKQCTVQQCFGKRGPNQNFGGGEMLKLGTSDPQFPILAELAPTAGAFFFGSRLELAKVQNLSGNPDEPQKDVYELRYNGAIRFDSTLSGFETIMKVLNQNLNAYQHQEDGMMNISPKPQRQRGQKNGQVENDNISVAAPKSRVQQNKSRELTAEDISLLKKMDEPYTEDTSEI</sequence>
<organism>
    <name type="scientific">Porcine hemagglutinating encephalomyelitis virus (strain IAF-404)</name>
    <name type="common">HEV</name>
    <dbReference type="NCBI Taxonomy" id="230236"/>
    <lineage>
        <taxon>Viruses</taxon>
        <taxon>Riboviria</taxon>
        <taxon>Orthornavirae</taxon>
        <taxon>Pisuviricota</taxon>
        <taxon>Pisoniviricetes</taxon>
        <taxon>Nidovirales</taxon>
        <taxon>Cornidovirineae</taxon>
        <taxon>Coronaviridae</taxon>
        <taxon>Orthocoronavirinae</taxon>
        <taxon>Betacoronavirus</taxon>
        <taxon>Embecovirus</taxon>
        <taxon>Betacoronavirus 1</taxon>
    </lineage>
</organism>
<protein>
    <recommendedName>
        <fullName evidence="2">Nucleoprotein</fullName>
    </recommendedName>
    <alternativeName>
        <fullName evidence="2">Nucleocapsid protein</fullName>
        <shortName evidence="2">NC</shortName>
        <shortName evidence="2">Protein N</shortName>
    </alternativeName>
</protein>
<evidence type="ECO:0000250" key="1">
    <source>
        <dbReference type="UniProtKB" id="P0DTC9"/>
    </source>
</evidence>
<evidence type="ECO:0000255" key="2">
    <source>
        <dbReference type="HAMAP-Rule" id="MF_04096"/>
    </source>
</evidence>
<evidence type="ECO:0000255" key="3">
    <source>
        <dbReference type="PROSITE-ProRule" id="PRU01276"/>
    </source>
</evidence>
<evidence type="ECO:0000255" key="4">
    <source>
        <dbReference type="PROSITE-ProRule" id="PRU01277"/>
    </source>
</evidence>
<evidence type="ECO:0000256" key="5">
    <source>
        <dbReference type="SAM" id="MobiDB-lite"/>
    </source>
</evidence>
<feature type="chain" id="PRO_0000106013" description="Nucleoprotein">
    <location>
        <begin position="1"/>
        <end position="449"/>
    </location>
</feature>
<feature type="domain" description="CoV N NTD" evidence="3">
    <location>
        <begin position="61"/>
        <end position="190"/>
    </location>
</feature>
<feature type="domain" description="CoV N CTD" evidence="4">
    <location>
        <begin position="259"/>
        <end position="384"/>
    </location>
</feature>
<feature type="region of interest" description="Disordered" evidence="5">
    <location>
        <begin position="1"/>
        <end position="55"/>
    </location>
</feature>
<feature type="region of interest" description="RNA-binding" evidence="2">
    <location>
        <begin position="52"/>
        <end position="194"/>
    </location>
</feature>
<feature type="region of interest" description="Disordered" evidence="5">
    <location>
        <begin position="158"/>
        <end position="231"/>
    </location>
</feature>
<feature type="region of interest" description="Dimerization" evidence="2">
    <location>
        <begin position="266"/>
        <end position="385"/>
    </location>
</feature>
<feature type="region of interest" description="Disordered" evidence="5">
    <location>
        <begin position="266"/>
        <end position="297"/>
    </location>
</feature>
<feature type="region of interest" description="Disordered" evidence="5">
    <location>
        <begin position="387"/>
        <end position="449"/>
    </location>
</feature>
<feature type="compositionally biased region" description="Low complexity" evidence="5">
    <location>
        <begin position="9"/>
        <end position="22"/>
    </location>
</feature>
<feature type="compositionally biased region" description="Polar residues" evidence="5">
    <location>
        <begin position="29"/>
        <end position="38"/>
    </location>
</feature>
<feature type="compositionally biased region" description="Polar residues" evidence="5">
    <location>
        <begin position="45"/>
        <end position="55"/>
    </location>
</feature>
<feature type="compositionally biased region" description="Polar residues" evidence="5">
    <location>
        <begin position="194"/>
        <end position="204"/>
    </location>
</feature>
<feature type="compositionally biased region" description="Polar residues" evidence="5">
    <location>
        <begin position="212"/>
        <end position="227"/>
    </location>
</feature>
<feature type="compositionally biased region" description="Basic residues" evidence="5">
    <location>
        <begin position="266"/>
        <end position="276"/>
    </location>
</feature>
<feature type="compositionally biased region" description="Polar residues" evidence="5">
    <location>
        <begin position="400"/>
        <end position="410"/>
    </location>
</feature>
<feature type="compositionally biased region" description="Basic and acidic residues" evidence="5">
    <location>
        <begin position="423"/>
        <end position="440"/>
    </location>
</feature>
<feature type="binding site" evidence="1">
    <location>
        <position position="106"/>
    </location>
    <ligand>
        <name>RNA</name>
        <dbReference type="ChEBI" id="CHEBI:33697"/>
    </ligand>
</feature>
<feature type="binding site" evidence="1">
    <location>
        <position position="122"/>
    </location>
    <ligand>
        <name>RNA</name>
        <dbReference type="ChEBI" id="CHEBI:33697"/>
    </ligand>
</feature>
<feature type="binding site" evidence="1">
    <location>
        <position position="164"/>
    </location>
    <ligand>
        <name>RNA</name>
        <dbReference type="ChEBI" id="CHEBI:33697"/>
    </ligand>
</feature>
<feature type="modified residue" description="Phosphoserine; by host" evidence="2">
    <location>
        <position position="167"/>
    </location>
</feature>
<feature type="modified residue" description="Phosphothreonine; by host" evidence="2">
    <location>
        <position position="174"/>
    </location>
</feature>
<feature type="modified residue" description="Phosphoserine; by host" evidence="2">
    <location>
        <position position="191"/>
    </location>
</feature>
<feature type="modified residue" description="Phosphoserine; by host" evidence="2">
    <location>
        <position position="391"/>
    </location>
</feature>
<feature type="modified residue" description="Phosphoserine; by host" evidence="2">
    <location>
        <position position="424"/>
    </location>
</feature>
<feature type="modified residue" description="Phosphothreonine; by host" evidence="2">
    <location>
        <position position="428"/>
    </location>
</feature>
<accession>Q8JSP4</accession>
<gene>
    <name evidence="2" type="primary">N</name>
</gene>
<name>NCAP_CVPIA</name>